<evidence type="ECO:0000269" key="1">
    <source ref="2"/>
</evidence>
<evidence type="ECO:0000305" key="2"/>
<evidence type="ECO:0007829" key="3">
    <source>
        <dbReference type="PDB" id="2KAK"/>
    </source>
</evidence>
<evidence type="ECO:0007829" key="4">
    <source>
        <dbReference type="PDB" id="2L61"/>
    </source>
</evidence>
<comment type="function">
    <text>Binds 5 molecules of zinc. May have a role in Zn(2+) homeostasis during embryogenesis.</text>
</comment>
<comment type="developmental stage">
    <text>Expressed during embryogenesis.</text>
</comment>
<comment type="induction">
    <text>By abscisic acid (ABA).</text>
</comment>
<comment type="similarity">
    <text evidence="2">Belongs to the metallothionein superfamily. Type 15 family.</text>
</comment>
<proteinExistence type="evidence at protein level"/>
<feature type="initiator methionine" description="Removed" evidence="1">
    <location>
        <position position="1"/>
    </location>
</feature>
<feature type="chain" id="PRO_0000197426" description="EC protein I/II">
    <location>
        <begin position="2"/>
        <end position="81"/>
    </location>
</feature>
<feature type="sequence conflict" description="In Ref. 2; AA sequence." evidence="2" ref="2">
    <original>R</original>
    <variation>G</variation>
    <location>
        <position position="51"/>
    </location>
</feature>
<feature type="helix" evidence="4">
    <location>
        <begin position="5"/>
        <end position="7"/>
    </location>
</feature>
<feature type="strand" evidence="4">
    <location>
        <begin position="14"/>
        <end position="16"/>
    </location>
</feature>
<feature type="helix" evidence="4">
    <location>
        <begin position="20"/>
        <end position="22"/>
    </location>
</feature>
<feature type="turn" evidence="3">
    <location>
        <begin position="37"/>
        <end position="39"/>
    </location>
</feature>
<feature type="strand" evidence="3">
    <location>
        <begin position="58"/>
        <end position="61"/>
    </location>
</feature>
<feature type="helix" evidence="3">
    <location>
        <begin position="74"/>
        <end position="77"/>
    </location>
</feature>
<name>EC1_WHEAT</name>
<organism>
    <name type="scientific">Triticum aestivum</name>
    <name type="common">Wheat</name>
    <dbReference type="NCBI Taxonomy" id="4565"/>
    <lineage>
        <taxon>Eukaryota</taxon>
        <taxon>Viridiplantae</taxon>
        <taxon>Streptophyta</taxon>
        <taxon>Embryophyta</taxon>
        <taxon>Tracheophyta</taxon>
        <taxon>Spermatophyta</taxon>
        <taxon>Magnoliopsida</taxon>
        <taxon>Liliopsida</taxon>
        <taxon>Poales</taxon>
        <taxon>Poaceae</taxon>
        <taxon>BOP clade</taxon>
        <taxon>Pooideae</taxon>
        <taxon>Triticodae</taxon>
        <taxon>Triticeae</taxon>
        <taxon>Triticinae</taxon>
        <taxon>Triticum</taxon>
    </lineage>
</organism>
<sequence>MGCDDKCGCAVPCPGGTGCRCTSARSGAAAGEHTTCGCGEHCGCNPCACGREGTPSGRANRRANCSCGAACNCASCGSATA</sequence>
<reference key="1">
    <citation type="journal article" date="1992" name="Eur. J. Biochem.">
        <title>Wheat Ec metallothionein genes. Like mammalian Zn2+ metallothionein genes, wheat Zn2+ metallothionein genes are conspicuously expressed during embryogenesis.</title>
        <authorList>
            <person name="Kawashima I."/>
            <person name="Kennedy T.D."/>
            <person name="Chino M."/>
            <person name="Lane B.G."/>
        </authorList>
    </citation>
    <scope>NUCLEOTIDE SEQUENCE [MRNA]</scope>
    <source>
        <strain>cv. Neepawa</strain>
        <tissue>Embryo</tissue>
    </source>
</reference>
<reference key="2">
    <citation type="journal article" date="1984" name="Can. J. Biochem. Cell Biol.">
        <title>Partial amino acid sequence of the wheat germ Ec protein. Comparison with another protein very rich in half-cystine and glycine. Wheat germ agglutinin.</title>
        <authorList>
            <person name="Hofmann T."/>
            <person name="Kells D.I.C."/>
            <person name="Lane B.G."/>
        </authorList>
    </citation>
    <scope>PROTEIN SEQUENCE OF 2-60</scope>
    <source>
        <strain>cv. Thatcher</strain>
        <tissue>Embryo</tissue>
    </source>
</reference>
<dbReference type="EMBL" id="X68289">
    <property type="protein sequence ID" value="CAA48349.1"/>
    <property type="molecule type" value="mRNA"/>
</dbReference>
<dbReference type="EMBL" id="X68290">
    <property type="protein sequence ID" value="CAA48350.1"/>
    <property type="molecule type" value="mRNA"/>
</dbReference>
<dbReference type="PIR" id="S27369">
    <property type="entry name" value="S27369"/>
</dbReference>
<dbReference type="RefSeq" id="NP_001414924.1">
    <property type="nucleotide sequence ID" value="NM_001427995.1"/>
</dbReference>
<dbReference type="RefSeq" id="XP_044442439.1">
    <property type="nucleotide sequence ID" value="XM_044586504.1"/>
</dbReference>
<dbReference type="PDB" id="2KAK">
    <property type="method" value="NMR"/>
    <property type="chains" value="A=31-81"/>
</dbReference>
<dbReference type="PDB" id="2L61">
    <property type="method" value="NMR"/>
    <property type="chains" value="A=2-25"/>
</dbReference>
<dbReference type="PDB" id="2L62">
    <property type="method" value="NMR"/>
    <property type="chains" value="A=2-25"/>
</dbReference>
<dbReference type="PDB" id="2MFP">
    <property type="method" value="NMR"/>
    <property type="chains" value="A=2-27"/>
</dbReference>
<dbReference type="PDBsum" id="2KAK"/>
<dbReference type="PDBsum" id="2L61"/>
<dbReference type="PDBsum" id="2L62"/>
<dbReference type="PDBsum" id="2MFP"/>
<dbReference type="BMRB" id="P30569"/>
<dbReference type="SMR" id="P30569"/>
<dbReference type="STRING" id="4565.P30569"/>
<dbReference type="EnsemblPlants" id="TraesARI1B03G00300180.1">
    <property type="protein sequence ID" value="TraesARI1B03G00300180.1.CDS1"/>
    <property type="gene ID" value="TraesARI1B03G00300180"/>
</dbReference>
<dbReference type="EnsemblPlants" id="TraesARI1D03G00499060.1">
    <property type="protein sequence ID" value="TraesARI1D03G00499060.1.CDS1"/>
    <property type="gene ID" value="TraesARI1D03G00499060"/>
</dbReference>
<dbReference type="EnsemblPlants" id="TraesCAD_scaffold_029776_01G000200.1">
    <property type="protein sequence ID" value="TraesCAD_scaffold_029776_01G000200.1"/>
    <property type="gene ID" value="TraesCAD_scaffold_029776_01G000200"/>
</dbReference>
<dbReference type="EnsemblPlants" id="TraesCAD_scaffold_098637_01G000200.1">
    <property type="protein sequence ID" value="TraesCAD_scaffold_098637_01G000200.1"/>
    <property type="gene ID" value="TraesCAD_scaffold_098637_01G000200"/>
</dbReference>
<dbReference type="EnsemblPlants" id="TraesCLE_scaffold_055646_01G000400.1">
    <property type="protein sequence ID" value="TraesCLE_scaffold_055646_01G000400.1"/>
    <property type="gene ID" value="TraesCLE_scaffold_055646_01G000400"/>
</dbReference>
<dbReference type="EnsemblPlants" id="TraesCLE_scaffold_166105_01G000100.1">
    <property type="protein sequence ID" value="TraesCLE_scaffold_166105_01G000100.1"/>
    <property type="gene ID" value="TraesCLE_scaffold_166105_01G000100"/>
</dbReference>
<dbReference type="EnsemblPlants" id="TraesCS1B02G216800.1">
    <property type="protein sequence ID" value="TraesCS1B02G216800.1.cds1"/>
    <property type="gene ID" value="TraesCS1B02G216800"/>
</dbReference>
<dbReference type="EnsemblPlants" id="TraesCS1B03G0630100.1">
    <property type="protein sequence ID" value="TraesCS1B03G0630100.1.CDS1"/>
    <property type="gene ID" value="TraesCS1B03G0630100"/>
</dbReference>
<dbReference type="EnsemblPlants" id="TraesCS1D02G206300.1">
    <property type="protein sequence ID" value="TraesCS1D02G206300.1.cds1"/>
    <property type="gene ID" value="TraesCS1D02G206300"/>
</dbReference>
<dbReference type="EnsemblPlants" id="TraesCS1D03G0521500.1">
    <property type="protein sequence ID" value="TraesCS1D03G0521500.1.CDS1"/>
    <property type="gene ID" value="TraesCS1D03G0521500"/>
</dbReference>
<dbReference type="EnsemblPlants" id="TraesJAG1B03G00297060.1">
    <property type="protein sequence ID" value="TraesJAG1B03G00297060.1.CDS1"/>
    <property type="gene ID" value="TraesJAG1B03G00297060"/>
</dbReference>
<dbReference type="EnsemblPlants" id="TraesJAG1D03G00492920.1">
    <property type="protein sequence ID" value="TraesJAG1D03G00492920.1.CDS1"/>
    <property type="gene ID" value="TraesJAG1D03G00492920"/>
</dbReference>
<dbReference type="EnsemblPlants" id="TraesJUL1B03G00297190.1">
    <property type="protein sequence ID" value="TraesJUL1B03G00297190.1.CDS1"/>
    <property type="gene ID" value="TraesJUL1B03G00297190"/>
</dbReference>
<dbReference type="EnsemblPlants" id="TraesJUL1D03G00496320.1">
    <property type="protein sequence ID" value="TraesJUL1D03G00496320.1.CDS1"/>
    <property type="gene ID" value="TraesJUL1D03G00496320"/>
</dbReference>
<dbReference type="EnsemblPlants" id="TraesKAR1B01G0261180.1">
    <property type="protein sequence ID" value="cds.TraesKAR1B01G0261180.1"/>
    <property type="gene ID" value="TraesKAR1B01G0261180"/>
</dbReference>
<dbReference type="EnsemblPlants" id="TraesKAR1D01G0211450.1">
    <property type="protein sequence ID" value="cds.TraesKAR1D01G0211450.1"/>
    <property type="gene ID" value="TraesKAR1D01G0211450"/>
</dbReference>
<dbReference type="EnsemblPlants" id="TraesLAC1B03G00300680.1">
    <property type="protein sequence ID" value="TraesLAC1B03G00300680.1.CDS1"/>
    <property type="gene ID" value="TraesLAC1B03G00300680"/>
</dbReference>
<dbReference type="EnsemblPlants" id="TraesLAC1D03G00496580.1">
    <property type="protein sequence ID" value="TraesLAC1D03G00496580.1.CDS1"/>
    <property type="gene ID" value="TraesLAC1D03G00496580"/>
</dbReference>
<dbReference type="EnsemblPlants" id="TraesLDM1B03G00297360.1">
    <property type="protein sequence ID" value="TraesLDM1B03G00297360.1.CDS1"/>
    <property type="gene ID" value="TraesLDM1B03G00297360"/>
</dbReference>
<dbReference type="EnsemblPlants" id="TraesLDM1D03G00496080.1">
    <property type="protein sequence ID" value="TraesLDM1D03G00496080.1.CDS1"/>
    <property type="gene ID" value="TraesLDM1D03G00496080"/>
</dbReference>
<dbReference type="EnsemblPlants" id="TraesMAC1B03G00299190.1">
    <property type="protein sequence ID" value="TraesMAC1B03G00299190.1.CDS1"/>
    <property type="gene ID" value="TraesMAC1B03G00299190"/>
</dbReference>
<dbReference type="EnsemblPlants" id="TraesMAC1D03G00492690.1">
    <property type="protein sequence ID" value="TraesMAC1D03G00492690.1.CDS1"/>
    <property type="gene ID" value="TraesMAC1D03G00492690"/>
</dbReference>
<dbReference type="EnsemblPlants" id="TraesNOR1B03G00301930.1">
    <property type="protein sequence ID" value="TraesNOR1B03G00301930.1.CDS1"/>
    <property type="gene ID" value="TraesNOR1B03G00301930"/>
</dbReference>
<dbReference type="EnsemblPlants" id="TraesNOR1D03G00501220.1">
    <property type="protein sequence ID" value="TraesNOR1D03G00501220.1.CDS1"/>
    <property type="gene ID" value="TraesNOR1D03G00501220"/>
</dbReference>
<dbReference type="EnsemblPlants" id="TraesPARA_EIv1.0_0164550.1">
    <property type="protein sequence ID" value="TraesPARA_EIv1.0_0164550.1.CDS1"/>
    <property type="gene ID" value="TraesPARA_EIv1.0_0164550"/>
</dbReference>
<dbReference type="EnsemblPlants" id="TraesPARA_EIv1.0_0277780.1">
    <property type="protein sequence ID" value="TraesPARA_EIv1.0_0277780.1.CDS1"/>
    <property type="gene ID" value="TraesPARA_EIv1.0_0277780"/>
</dbReference>
<dbReference type="EnsemblPlants" id="TraesRN1B0100631200.1">
    <property type="protein sequence ID" value="TraesRN1B0100631200.1"/>
    <property type="gene ID" value="TraesRN1B0100631200"/>
</dbReference>
<dbReference type="EnsemblPlants" id="TraesROB_scaffold_091640_01G000400.1">
    <property type="protein sequence ID" value="TraesROB_scaffold_091640_01G000400.1"/>
    <property type="gene ID" value="TraesROB_scaffold_091640_01G000400"/>
</dbReference>
<dbReference type="EnsemblPlants" id="TraesROB_scaffold_100017_01G000200.1">
    <property type="protein sequence ID" value="TraesROB_scaffold_100017_01G000200.1"/>
    <property type="gene ID" value="TraesROB_scaffold_100017_01G000200"/>
</dbReference>
<dbReference type="EnsemblPlants" id="TraesSTA1B03G00296090.1">
    <property type="protein sequence ID" value="TraesSTA1B03G00296090.1.CDS1"/>
    <property type="gene ID" value="TraesSTA1B03G00296090"/>
</dbReference>
<dbReference type="EnsemblPlants" id="TraesSTA1D03G00492190.1">
    <property type="protein sequence ID" value="TraesSTA1D03G00492190.1.CDS1"/>
    <property type="gene ID" value="TraesSTA1D03G00492190"/>
</dbReference>
<dbReference type="EnsemblPlants" id="TraesSYM1B03G00304120.1">
    <property type="protein sequence ID" value="TraesSYM1B03G00304120.1.CDS1"/>
    <property type="gene ID" value="TraesSYM1B03G00304120"/>
</dbReference>
<dbReference type="EnsemblPlants" id="TraesSYM1D03G00500280.1">
    <property type="protein sequence ID" value="TraesSYM1D03G00500280.1.CDS1"/>
    <property type="gene ID" value="TraesSYM1D03G00500280"/>
</dbReference>
<dbReference type="EnsemblPlants" id="TraesWEE_scaffold_108089_01G000100.1">
    <property type="protein sequence ID" value="TraesWEE_scaffold_108089_01G000100.1"/>
    <property type="gene ID" value="TraesWEE_scaffold_108089_01G000100"/>
</dbReference>
<dbReference type="EnsemblPlants" id="TraesWEE_scaffold_109422_01G000100.1">
    <property type="protein sequence ID" value="TraesWEE_scaffold_109422_01G000100.1"/>
    <property type="gene ID" value="TraesWEE_scaffold_109422_01G000100"/>
</dbReference>
<dbReference type="GeneID" id="123168617"/>
<dbReference type="GeneID" id="543479"/>
<dbReference type="Gramene" id="TraesARI1B03G00300180.1">
    <property type="protein sequence ID" value="TraesARI1B03G00300180.1.CDS1"/>
    <property type="gene ID" value="TraesARI1B03G00300180"/>
</dbReference>
<dbReference type="Gramene" id="TraesARI1D03G00499060.1">
    <property type="protein sequence ID" value="TraesARI1D03G00499060.1.CDS1"/>
    <property type="gene ID" value="TraesARI1D03G00499060"/>
</dbReference>
<dbReference type="Gramene" id="TraesCAD_scaffold_029776_01G000200.1">
    <property type="protein sequence ID" value="TraesCAD_scaffold_029776_01G000200.1"/>
    <property type="gene ID" value="TraesCAD_scaffold_029776_01G000200"/>
</dbReference>
<dbReference type="Gramene" id="TraesCAD_scaffold_098637_01G000200.1">
    <property type="protein sequence ID" value="TraesCAD_scaffold_098637_01G000200.1"/>
    <property type="gene ID" value="TraesCAD_scaffold_098637_01G000200"/>
</dbReference>
<dbReference type="Gramene" id="TraesCLE_scaffold_055646_01G000400.1">
    <property type="protein sequence ID" value="TraesCLE_scaffold_055646_01G000400.1"/>
    <property type="gene ID" value="TraesCLE_scaffold_055646_01G000400"/>
</dbReference>
<dbReference type="Gramene" id="TraesCLE_scaffold_166105_01G000100.1">
    <property type="protein sequence ID" value="TraesCLE_scaffold_166105_01G000100.1"/>
    <property type="gene ID" value="TraesCLE_scaffold_166105_01G000100"/>
</dbReference>
<dbReference type="Gramene" id="TraesCS1B02G216800.1">
    <property type="protein sequence ID" value="TraesCS1B02G216800.1.cds1"/>
    <property type="gene ID" value="TraesCS1B02G216800"/>
</dbReference>
<dbReference type="Gramene" id="TraesCS1B03G0630100.1">
    <property type="protein sequence ID" value="TraesCS1B03G0630100.1.CDS1"/>
    <property type="gene ID" value="TraesCS1B03G0630100"/>
</dbReference>
<dbReference type="Gramene" id="TraesCS1D02G206300.1">
    <property type="protein sequence ID" value="TraesCS1D02G206300.1.cds1"/>
    <property type="gene ID" value="TraesCS1D02G206300"/>
</dbReference>
<dbReference type="Gramene" id="TraesCS1D03G0521500.1">
    <property type="protein sequence ID" value="TraesCS1D03G0521500.1.CDS1"/>
    <property type="gene ID" value="TraesCS1D03G0521500"/>
</dbReference>
<dbReference type="Gramene" id="TraesJAG1B03G00297060.1">
    <property type="protein sequence ID" value="TraesJAG1B03G00297060.1.CDS1"/>
    <property type="gene ID" value="TraesJAG1B03G00297060"/>
</dbReference>
<dbReference type="Gramene" id="TraesJAG1D03G00492920.1">
    <property type="protein sequence ID" value="TraesJAG1D03G00492920.1.CDS1"/>
    <property type="gene ID" value="TraesJAG1D03G00492920"/>
</dbReference>
<dbReference type="Gramene" id="TraesJUL1B03G00297190.1">
    <property type="protein sequence ID" value="TraesJUL1B03G00297190.1.CDS1"/>
    <property type="gene ID" value="TraesJUL1B03G00297190"/>
</dbReference>
<dbReference type="Gramene" id="TraesJUL1D03G00496320.1">
    <property type="protein sequence ID" value="TraesJUL1D03G00496320.1.CDS1"/>
    <property type="gene ID" value="TraesJUL1D03G00496320"/>
</dbReference>
<dbReference type="Gramene" id="TraesKAR1B01G0261180.1">
    <property type="protein sequence ID" value="cds.TraesKAR1B01G0261180.1"/>
    <property type="gene ID" value="TraesKAR1B01G0261180"/>
</dbReference>
<dbReference type="Gramene" id="TraesKAR1D01G0211450.1">
    <property type="protein sequence ID" value="cds.TraesKAR1D01G0211450.1"/>
    <property type="gene ID" value="TraesKAR1D01G0211450"/>
</dbReference>
<dbReference type="Gramene" id="TraesLAC1B03G00300680.1">
    <property type="protein sequence ID" value="TraesLAC1B03G00300680.1.CDS1"/>
    <property type="gene ID" value="TraesLAC1B03G00300680"/>
</dbReference>
<dbReference type="Gramene" id="TraesLAC1D03G00496580.1">
    <property type="protein sequence ID" value="TraesLAC1D03G00496580.1.CDS1"/>
    <property type="gene ID" value="TraesLAC1D03G00496580"/>
</dbReference>
<dbReference type="Gramene" id="TraesLDM1B03G00297360.1">
    <property type="protein sequence ID" value="TraesLDM1B03G00297360.1.CDS1"/>
    <property type="gene ID" value="TraesLDM1B03G00297360"/>
</dbReference>
<dbReference type="Gramene" id="TraesLDM1D03G00496080.1">
    <property type="protein sequence ID" value="TraesLDM1D03G00496080.1.CDS1"/>
    <property type="gene ID" value="TraesLDM1D03G00496080"/>
</dbReference>
<dbReference type="Gramene" id="TraesMAC1B03G00299190.1">
    <property type="protein sequence ID" value="TraesMAC1B03G00299190.1.CDS1"/>
    <property type="gene ID" value="TraesMAC1B03G00299190"/>
</dbReference>
<dbReference type="Gramene" id="TraesMAC1D03G00492690.1">
    <property type="protein sequence ID" value="TraesMAC1D03G00492690.1.CDS1"/>
    <property type="gene ID" value="TraesMAC1D03G00492690"/>
</dbReference>
<dbReference type="Gramene" id="TraesNOR1B03G00301930.1">
    <property type="protein sequence ID" value="TraesNOR1B03G00301930.1.CDS1"/>
    <property type="gene ID" value="TraesNOR1B03G00301930"/>
</dbReference>
<dbReference type="Gramene" id="TraesNOR1D03G00501220.1">
    <property type="protein sequence ID" value="TraesNOR1D03G00501220.1.CDS1"/>
    <property type="gene ID" value="TraesNOR1D03G00501220"/>
</dbReference>
<dbReference type="Gramene" id="TraesPARA_EIv1.0_0164550.1">
    <property type="protein sequence ID" value="TraesPARA_EIv1.0_0164550.1.CDS1"/>
    <property type="gene ID" value="TraesPARA_EIv1.0_0164550"/>
</dbReference>
<dbReference type="Gramene" id="TraesPARA_EIv1.0_0277780.1">
    <property type="protein sequence ID" value="TraesPARA_EIv1.0_0277780.1.CDS1"/>
    <property type="gene ID" value="TraesPARA_EIv1.0_0277780"/>
</dbReference>
<dbReference type="Gramene" id="TraesRN1B0100631200.1">
    <property type="protein sequence ID" value="TraesRN1B0100631200.1"/>
    <property type="gene ID" value="TraesRN1B0100631200"/>
</dbReference>
<dbReference type="Gramene" id="TraesROB_scaffold_091640_01G000400.1">
    <property type="protein sequence ID" value="TraesROB_scaffold_091640_01G000400.1"/>
    <property type="gene ID" value="TraesROB_scaffold_091640_01G000400"/>
</dbReference>
<dbReference type="Gramene" id="TraesROB_scaffold_100017_01G000200.1">
    <property type="protein sequence ID" value="TraesROB_scaffold_100017_01G000200.1"/>
    <property type="gene ID" value="TraesROB_scaffold_100017_01G000200"/>
</dbReference>
<dbReference type="Gramene" id="TraesSTA1B03G00296090.1">
    <property type="protein sequence ID" value="TraesSTA1B03G00296090.1.CDS1"/>
    <property type="gene ID" value="TraesSTA1B03G00296090"/>
</dbReference>
<dbReference type="Gramene" id="TraesSTA1D03G00492190.1">
    <property type="protein sequence ID" value="TraesSTA1D03G00492190.1.CDS1"/>
    <property type="gene ID" value="TraesSTA1D03G00492190"/>
</dbReference>
<dbReference type="Gramene" id="TraesSYM1B03G00304120.1">
    <property type="protein sequence ID" value="TraesSYM1B03G00304120.1.CDS1"/>
    <property type="gene ID" value="TraesSYM1B03G00304120"/>
</dbReference>
<dbReference type="Gramene" id="TraesSYM1D03G00500280.1">
    <property type="protein sequence ID" value="TraesSYM1D03G00500280.1.CDS1"/>
    <property type="gene ID" value="TraesSYM1D03G00500280"/>
</dbReference>
<dbReference type="Gramene" id="TraesWEE_scaffold_108089_01G000100.1">
    <property type="protein sequence ID" value="TraesWEE_scaffold_108089_01G000100.1"/>
    <property type="gene ID" value="TraesWEE_scaffold_108089_01G000100"/>
</dbReference>
<dbReference type="Gramene" id="TraesWEE_scaffold_109422_01G000100.1">
    <property type="protein sequence ID" value="TraesWEE_scaffold_109422_01G000100.1"/>
    <property type="gene ID" value="TraesWEE_scaffold_109422_01G000100"/>
</dbReference>
<dbReference type="OMA" id="NCNCASC"/>
<dbReference type="OrthoDB" id="1929463at2759"/>
<dbReference type="EvolutionaryTrace" id="P30569"/>
<dbReference type="Proteomes" id="UP000019116">
    <property type="component" value="Chromosome 1B"/>
</dbReference>
<dbReference type="Proteomes" id="UP000019116">
    <property type="component" value="Chromosome 1D"/>
</dbReference>
<dbReference type="GO" id="GO:0008270">
    <property type="term" value="F:zinc ion binding"/>
    <property type="evidence" value="ECO:0007669"/>
    <property type="project" value="InterPro"/>
</dbReference>
<dbReference type="InterPro" id="IPR000316">
    <property type="entry name" value="Metallthion_15"/>
</dbReference>
<dbReference type="PANTHER" id="PTHR48198">
    <property type="entry name" value="EC PROTEIN HOMOLOG"/>
    <property type="match status" value="1"/>
</dbReference>
<dbReference type="PANTHER" id="PTHR48198:SF1">
    <property type="entry name" value="METALLOTHIONEIN-LIKE PROTEIN 4A-RELATED"/>
    <property type="match status" value="1"/>
</dbReference>
<dbReference type="Pfam" id="PF02068">
    <property type="entry name" value="Metallothio_PEC"/>
    <property type="match status" value="1"/>
</dbReference>
<dbReference type="PRINTS" id="PR00877">
    <property type="entry name" value="MTPLANTPEC"/>
</dbReference>
<protein>
    <recommendedName>
        <fullName>EC protein I/II</fullName>
    </recommendedName>
    <alternativeName>
        <fullName>Zinc metallothionein class II</fullName>
    </alternativeName>
</protein>
<keyword id="KW-0002">3D-structure</keyword>
<keyword id="KW-0903">Direct protein sequencing</keyword>
<keyword id="KW-0479">Metal-binding</keyword>
<keyword id="KW-0480">Metal-thiolate cluster</keyword>
<keyword id="KW-1185">Reference proteome</keyword>
<keyword id="KW-0862">Zinc</keyword>
<accession>P30569</accession>